<keyword id="KW-0325">Glycoprotein</keyword>
<keyword id="KW-0494">Milk protein</keyword>
<keyword id="KW-0597">Phosphoprotein</keyword>
<keyword id="KW-1185">Reference proteome</keyword>
<keyword id="KW-0677">Repeat</keyword>
<keyword id="KW-0964">Secreted</keyword>
<keyword id="KW-0732">Signal</keyword>
<gene>
    <name type="primary">CSN3</name>
    <name type="synonym">CSN10</name>
    <name type="synonym">CSNK</name>
</gene>
<organism>
    <name type="scientific">Cavia porcellus</name>
    <name type="common">Guinea pig</name>
    <dbReference type="NCBI Taxonomy" id="10141"/>
    <lineage>
        <taxon>Eukaryota</taxon>
        <taxon>Metazoa</taxon>
        <taxon>Chordata</taxon>
        <taxon>Craniata</taxon>
        <taxon>Vertebrata</taxon>
        <taxon>Euteleostomi</taxon>
        <taxon>Mammalia</taxon>
        <taxon>Eutheria</taxon>
        <taxon>Euarchontoglires</taxon>
        <taxon>Glires</taxon>
        <taxon>Rodentia</taxon>
        <taxon>Hystricomorpha</taxon>
        <taxon>Caviidae</taxon>
        <taxon>Cavia</taxon>
    </lineage>
</organism>
<accession>P19442</accession>
<protein>
    <recommendedName>
        <fullName>Kappa-casein</fullName>
    </recommendedName>
</protein>
<name>CASK_CAVPO</name>
<proteinExistence type="evidence at transcript level"/>
<feature type="signal peptide" evidence="1">
    <location>
        <begin position="1"/>
        <end position="21"/>
    </location>
</feature>
<feature type="chain" id="PRO_0000004495" description="Kappa-casein">
    <location>
        <begin position="22"/>
        <end position="234"/>
    </location>
</feature>
<feature type="repeat" description="1">
    <location>
        <begin position="127"/>
        <end position="153"/>
    </location>
</feature>
<feature type="repeat" description="2">
    <location>
        <begin position="154"/>
        <end position="179"/>
    </location>
</feature>
<feature type="repeat" description="3">
    <location>
        <begin position="180"/>
        <end position="207"/>
    </location>
</feature>
<feature type="region of interest" description="3 X 27 AA tandem repeats">
    <location>
        <begin position="127"/>
        <end position="207"/>
    </location>
</feature>
<feature type="region of interest" description="Disordered" evidence="3">
    <location>
        <begin position="143"/>
        <end position="234"/>
    </location>
</feature>
<feature type="compositionally biased region" description="Polar residues" evidence="3">
    <location>
        <begin position="144"/>
        <end position="171"/>
    </location>
</feature>
<feature type="site" description="Cleavage; by chymosin/rennin">
    <location>
        <begin position="118"/>
        <end position="119"/>
    </location>
</feature>
<feature type="modified residue" description="Phosphothreonine" evidence="2">
    <location>
        <position position="158"/>
    </location>
</feature>
<feature type="modified residue" description="Phosphoserine; alternate" evidence="2">
    <location>
        <position position="162"/>
    </location>
</feature>
<feature type="glycosylation site" description="O-linked (GalNAc...) threonine" evidence="2">
    <location>
        <position position="144"/>
    </location>
</feature>
<feature type="glycosylation site" description="O-linked (GalNAc...) serine; alternate" evidence="2">
    <location>
        <position position="162"/>
    </location>
</feature>
<sequence length="234" mass="25597">MMKSFLLVVNIVALTLPFLAAEVQNQEQPACCGNDERLFEQKKVLYLLSYPVLNNYLRTAPSYYQNRASVPINNPYLCHLYYVPSFVLWAQGQIPKGPVSTDIHQSTMQYHQAKHPSFMAILSKKILGKATILSTDAIAAPEQTPVSAAQPTVSAGDTPEVSSQFIDTPDTSVLAEEARESPEDTPEISEFINAPDTAVPSEEPRESAEDTPEISSEFIFSPETSTGPAIASMA</sequence>
<comment type="function">
    <text>Kappa-casein stabilizes micelle formation, preventing casein precipitation in milk.</text>
</comment>
<comment type="subcellular location">
    <subcellularLocation>
        <location>Secreted</location>
    </subcellularLocation>
</comment>
<comment type="tissue specificity">
    <text>Mammary gland specific. Secreted in milk.</text>
</comment>
<comment type="similarity">
    <text evidence="4">Belongs to the kappa-casein family.</text>
</comment>
<reference key="1">
    <citation type="journal article" date="1990" name="Nucleic Acids Res.">
        <title>Nucleotide sequence of guinea-pig kappa-casein cDNA.</title>
        <authorList>
            <person name="Hall L."/>
        </authorList>
    </citation>
    <scope>NUCLEOTIDE SEQUENCE [MRNA]</scope>
    <source>
        <tissue>Mammary gland</tissue>
    </source>
</reference>
<evidence type="ECO:0000250" key="1"/>
<evidence type="ECO:0000250" key="2">
    <source>
        <dbReference type="UniProtKB" id="P02668"/>
    </source>
</evidence>
<evidence type="ECO:0000256" key="3">
    <source>
        <dbReference type="SAM" id="MobiDB-lite"/>
    </source>
</evidence>
<evidence type="ECO:0000305" key="4"/>
<dbReference type="EMBL" id="X56020">
    <property type="protein sequence ID" value="CAA39497.1"/>
    <property type="molecule type" value="mRNA"/>
</dbReference>
<dbReference type="PIR" id="S12092">
    <property type="entry name" value="S12092"/>
</dbReference>
<dbReference type="FunCoup" id="P19442">
    <property type="interactions" value="176"/>
</dbReference>
<dbReference type="STRING" id="10141.ENSCPOP00000004384"/>
<dbReference type="GlyCosmos" id="P19442">
    <property type="glycosylation" value="2 sites, No reported glycans"/>
</dbReference>
<dbReference type="eggNOG" id="ENOG502TM2T">
    <property type="taxonomic scope" value="Eukaryota"/>
</dbReference>
<dbReference type="HOGENOM" id="CLU_103388_0_0_1"/>
<dbReference type="InParanoid" id="P19442"/>
<dbReference type="TreeFam" id="TF338369"/>
<dbReference type="Proteomes" id="UP000005447">
    <property type="component" value="Unassembled WGS sequence"/>
</dbReference>
<dbReference type="GO" id="GO:0005615">
    <property type="term" value="C:extracellular space"/>
    <property type="evidence" value="ECO:0007669"/>
    <property type="project" value="TreeGrafter"/>
</dbReference>
<dbReference type="GO" id="GO:0007595">
    <property type="term" value="P:lactation"/>
    <property type="evidence" value="ECO:0007669"/>
    <property type="project" value="TreeGrafter"/>
</dbReference>
<dbReference type="GO" id="GO:0050821">
    <property type="term" value="P:protein stabilization"/>
    <property type="evidence" value="ECO:0007669"/>
    <property type="project" value="TreeGrafter"/>
</dbReference>
<dbReference type="InterPro" id="IPR000117">
    <property type="entry name" value="Casein_kappa"/>
</dbReference>
<dbReference type="PANTHER" id="PTHR11470">
    <property type="entry name" value="KAPPA CASEIN"/>
    <property type="match status" value="1"/>
</dbReference>
<dbReference type="PANTHER" id="PTHR11470:SF2">
    <property type="entry name" value="KAPPA-CASEIN"/>
    <property type="match status" value="1"/>
</dbReference>
<dbReference type="Pfam" id="PF00997">
    <property type="entry name" value="Casein_kappa"/>
    <property type="match status" value="1"/>
</dbReference>
<dbReference type="PIRSF" id="PIRSF002374">
    <property type="entry name" value="Casein_kappa"/>
    <property type="match status" value="1"/>
</dbReference>